<organism>
    <name type="scientific">Mycoplasma pneumoniae (strain ATCC 29342 / M129 / Subtype 1)</name>
    <name type="common">Mycoplasmoides pneumoniae</name>
    <dbReference type="NCBI Taxonomy" id="272634"/>
    <lineage>
        <taxon>Bacteria</taxon>
        <taxon>Bacillati</taxon>
        <taxon>Mycoplasmatota</taxon>
        <taxon>Mycoplasmoidales</taxon>
        <taxon>Mycoplasmoidaceae</taxon>
        <taxon>Mycoplasmoides</taxon>
    </lineage>
</organism>
<name>DNAA_MYCPN</name>
<reference key="1">
    <citation type="journal article" date="1996" name="Nucleic Acids Res.">
        <title>Sequence analysis of 56 kb from the genome of the bacterium Mycoplasma pneumoniae comprising the dnaA region, the atp operon and a cluster of ribosomal protein genes.</title>
        <authorList>
            <person name="Hilbert H."/>
            <person name="Himmelreich R."/>
            <person name="Plagens H."/>
            <person name="Herrmann R."/>
        </authorList>
    </citation>
    <scope>NUCLEOTIDE SEQUENCE [GENOMIC DNA]</scope>
    <source>
        <strain>ATCC 29342 / M129 / Subtype 1</strain>
    </source>
</reference>
<reference key="2">
    <citation type="journal article" date="1996" name="Nucleic Acids Res.">
        <title>Complete sequence analysis of the genome of the bacterium Mycoplasma pneumoniae.</title>
        <authorList>
            <person name="Himmelreich R."/>
            <person name="Hilbert H."/>
            <person name="Plagens H."/>
            <person name="Pirkl E."/>
            <person name="Li B.-C."/>
            <person name="Herrmann R."/>
        </authorList>
    </citation>
    <scope>NUCLEOTIDE SEQUENCE [LARGE SCALE GENOMIC DNA]</scope>
    <source>
        <strain>ATCC 29342 / M129 / Subtype 1</strain>
    </source>
</reference>
<dbReference type="EMBL" id="U34816">
    <property type="protein sequence ID" value="AAC43648.1"/>
    <property type="molecule type" value="Genomic_DNA"/>
</dbReference>
<dbReference type="EMBL" id="U00089">
    <property type="protein sequence ID" value="AAB95804.1"/>
    <property type="molecule type" value="Genomic_DNA"/>
</dbReference>
<dbReference type="PIR" id="S62793">
    <property type="entry name" value="S62793"/>
</dbReference>
<dbReference type="RefSeq" id="NP_110375.1">
    <property type="nucleotide sequence ID" value="NC_000912.1"/>
</dbReference>
<dbReference type="RefSeq" id="WP_010875043.1">
    <property type="nucleotide sequence ID" value="NZ_OU342337.1"/>
</dbReference>
<dbReference type="SMR" id="Q59549"/>
<dbReference type="IntAct" id="Q59549">
    <property type="interactions" value="3"/>
</dbReference>
<dbReference type="STRING" id="272634.MPN_686"/>
<dbReference type="EnsemblBacteria" id="AAB95804">
    <property type="protein sequence ID" value="AAB95804"/>
    <property type="gene ID" value="MPN_686"/>
</dbReference>
<dbReference type="KEGG" id="mpn:MPN_686"/>
<dbReference type="PATRIC" id="fig|272634.6.peg.753"/>
<dbReference type="HOGENOM" id="CLU_026910_3_2_14"/>
<dbReference type="OrthoDB" id="9807019at2"/>
<dbReference type="BioCyc" id="MPNE272634:G1GJ3-1097-MONOMER"/>
<dbReference type="Proteomes" id="UP000000808">
    <property type="component" value="Chromosome"/>
</dbReference>
<dbReference type="GO" id="GO:0005737">
    <property type="term" value="C:cytoplasm"/>
    <property type="evidence" value="ECO:0007669"/>
    <property type="project" value="UniProtKB-SubCell"/>
</dbReference>
<dbReference type="GO" id="GO:0005886">
    <property type="term" value="C:plasma membrane"/>
    <property type="evidence" value="ECO:0007669"/>
    <property type="project" value="TreeGrafter"/>
</dbReference>
<dbReference type="GO" id="GO:0005524">
    <property type="term" value="F:ATP binding"/>
    <property type="evidence" value="ECO:0007669"/>
    <property type="project" value="UniProtKB-UniRule"/>
</dbReference>
<dbReference type="GO" id="GO:0016887">
    <property type="term" value="F:ATP hydrolysis activity"/>
    <property type="evidence" value="ECO:0007669"/>
    <property type="project" value="InterPro"/>
</dbReference>
<dbReference type="GO" id="GO:0003688">
    <property type="term" value="F:DNA replication origin binding"/>
    <property type="evidence" value="ECO:0007669"/>
    <property type="project" value="UniProtKB-UniRule"/>
</dbReference>
<dbReference type="GO" id="GO:0008289">
    <property type="term" value="F:lipid binding"/>
    <property type="evidence" value="ECO:0007669"/>
    <property type="project" value="UniProtKB-KW"/>
</dbReference>
<dbReference type="GO" id="GO:0006270">
    <property type="term" value="P:DNA replication initiation"/>
    <property type="evidence" value="ECO:0007669"/>
    <property type="project" value="UniProtKB-UniRule"/>
</dbReference>
<dbReference type="GO" id="GO:0006275">
    <property type="term" value="P:regulation of DNA replication"/>
    <property type="evidence" value="ECO:0007669"/>
    <property type="project" value="UniProtKB-UniRule"/>
</dbReference>
<dbReference type="CDD" id="cd00009">
    <property type="entry name" value="AAA"/>
    <property type="match status" value="1"/>
</dbReference>
<dbReference type="CDD" id="cd06571">
    <property type="entry name" value="Bac_DnaA_C"/>
    <property type="match status" value="1"/>
</dbReference>
<dbReference type="FunFam" id="1.10.1750.10:FF:000015">
    <property type="match status" value="1"/>
</dbReference>
<dbReference type="Gene3D" id="1.10.1750.10">
    <property type="match status" value="1"/>
</dbReference>
<dbReference type="Gene3D" id="3.30.300.20">
    <property type="match status" value="1"/>
</dbReference>
<dbReference type="Gene3D" id="3.40.50.300">
    <property type="entry name" value="P-loop containing nucleotide triphosphate hydrolases"/>
    <property type="match status" value="1"/>
</dbReference>
<dbReference type="HAMAP" id="MF_00377">
    <property type="entry name" value="DnaA_bact"/>
    <property type="match status" value="1"/>
</dbReference>
<dbReference type="InterPro" id="IPR003593">
    <property type="entry name" value="AAA+_ATPase"/>
</dbReference>
<dbReference type="InterPro" id="IPR001957">
    <property type="entry name" value="Chromosome_initiator_DnaA"/>
</dbReference>
<dbReference type="InterPro" id="IPR020591">
    <property type="entry name" value="Chromosome_initiator_DnaA-like"/>
</dbReference>
<dbReference type="InterPro" id="IPR018312">
    <property type="entry name" value="Chromosome_initiator_DnaA_CS"/>
</dbReference>
<dbReference type="InterPro" id="IPR013159">
    <property type="entry name" value="DnaA_C"/>
</dbReference>
<dbReference type="InterPro" id="IPR013317">
    <property type="entry name" value="DnaA_dom"/>
</dbReference>
<dbReference type="InterPro" id="IPR024633">
    <property type="entry name" value="DnaA_N_dom"/>
</dbReference>
<dbReference type="InterPro" id="IPR015946">
    <property type="entry name" value="KH_dom-like_a/b"/>
</dbReference>
<dbReference type="InterPro" id="IPR027417">
    <property type="entry name" value="P-loop_NTPase"/>
</dbReference>
<dbReference type="InterPro" id="IPR010921">
    <property type="entry name" value="Trp_repressor/repl_initiator"/>
</dbReference>
<dbReference type="NCBIfam" id="TIGR00362">
    <property type="entry name" value="DnaA"/>
    <property type="match status" value="1"/>
</dbReference>
<dbReference type="NCBIfam" id="NF001154">
    <property type="entry name" value="PRK00149.3-3"/>
    <property type="match status" value="1"/>
</dbReference>
<dbReference type="PANTHER" id="PTHR30050">
    <property type="entry name" value="CHROMOSOMAL REPLICATION INITIATOR PROTEIN DNAA"/>
    <property type="match status" value="1"/>
</dbReference>
<dbReference type="PANTHER" id="PTHR30050:SF2">
    <property type="entry name" value="CHROMOSOMAL REPLICATION INITIATOR PROTEIN DNAA"/>
    <property type="match status" value="1"/>
</dbReference>
<dbReference type="Pfam" id="PF00308">
    <property type="entry name" value="Bac_DnaA"/>
    <property type="match status" value="1"/>
</dbReference>
<dbReference type="Pfam" id="PF08299">
    <property type="entry name" value="Bac_DnaA_C"/>
    <property type="match status" value="1"/>
</dbReference>
<dbReference type="Pfam" id="PF11638">
    <property type="entry name" value="DnaA_N"/>
    <property type="match status" value="1"/>
</dbReference>
<dbReference type="PRINTS" id="PR00051">
    <property type="entry name" value="DNAA"/>
</dbReference>
<dbReference type="SMART" id="SM00382">
    <property type="entry name" value="AAA"/>
    <property type="match status" value="1"/>
</dbReference>
<dbReference type="SMART" id="SM00760">
    <property type="entry name" value="Bac_DnaA_C"/>
    <property type="match status" value="1"/>
</dbReference>
<dbReference type="SUPFAM" id="SSF52540">
    <property type="entry name" value="P-loop containing nucleoside triphosphate hydrolases"/>
    <property type="match status" value="1"/>
</dbReference>
<dbReference type="SUPFAM" id="SSF48295">
    <property type="entry name" value="TrpR-like"/>
    <property type="match status" value="1"/>
</dbReference>
<dbReference type="PROSITE" id="PS01008">
    <property type="entry name" value="DNAA"/>
    <property type="match status" value="1"/>
</dbReference>
<accession>Q59549</accession>
<feature type="chain" id="PRO_0000114216" description="Chromosomal replication initiator protein DnaA">
    <location>
        <begin position="1"/>
        <end position="439"/>
    </location>
</feature>
<feature type="region of interest" description="Domain I, interacts with DnaA modulators" evidence="1">
    <location>
        <begin position="1"/>
        <end position="72"/>
    </location>
</feature>
<feature type="region of interest" description="Domain II" evidence="1">
    <location>
        <begin position="72"/>
        <end position="99"/>
    </location>
</feature>
<feature type="region of interest" description="Domain III, AAA+ region" evidence="1">
    <location>
        <begin position="100"/>
        <end position="322"/>
    </location>
</feature>
<feature type="region of interest" description="Domain IV, binds dsDNA" evidence="1">
    <location>
        <begin position="323"/>
        <end position="439"/>
    </location>
</feature>
<feature type="binding site" evidence="1">
    <location>
        <position position="144"/>
    </location>
    <ligand>
        <name>ATP</name>
        <dbReference type="ChEBI" id="CHEBI:30616"/>
    </ligand>
</feature>
<feature type="binding site" evidence="1">
    <location>
        <position position="146"/>
    </location>
    <ligand>
        <name>ATP</name>
        <dbReference type="ChEBI" id="CHEBI:30616"/>
    </ligand>
</feature>
<feature type="binding site" evidence="1">
    <location>
        <position position="147"/>
    </location>
    <ligand>
        <name>ATP</name>
        <dbReference type="ChEBI" id="CHEBI:30616"/>
    </ligand>
</feature>
<feature type="binding site" evidence="1">
    <location>
        <position position="148"/>
    </location>
    <ligand>
        <name>ATP</name>
        <dbReference type="ChEBI" id="CHEBI:30616"/>
    </ligand>
</feature>
<gene>
    <name evidence="1" type="primary">dnaA</name>
    <name type="ordered locus">MPN_686</name>
    <name type="ORF">MP156</name>
</gene>
<proteinExistence type="inferred from homology"/>
<evidence type="ECO:0000255" key="1">
    <source>
        <dbReference type="HAMAP-Rule" id="MF_00377"/>
    </source>
</evidence>
<protein>
    <recommendedName>
        <fullName evidence="1">Chromosomal replication initiator protein DnaA</fullName>
    </recommendedName>
</protein>
<keyword id="KW-0067">ATP-binding</keyword>
<keyword id="KW-0963">Cytoplasm</keyword>
<keyword id="KW-0235">DNA replication</keyword>
<keyword id="KW-0238">DNA-binding</keyword>
<keyword id="KW-0446">Lipid-binding</keyword>
<keyword id="KW-0547">Nucleotide-binding</keyword>
<keyword id="KW-1185">Reference proteome</keyword>
<sequence length="439" mass="50624">MEQFSAFKLLLKKQYETTLGFYDKYIKNLKRFALKNNVLFVIVDNEFARETLNSNPDIVGLASKLYDDIRAVRFVNEQDFFINLAKLEEDNRETLYQSSGLSKNFTFKNFVVGDGNRRVYEAGVRISETQDADFSPLFIYGETGLGKTHLLQAIGNDKFFHFPNAKVKYVVSSDFAQEVVNAFYQKEKDQGIEKLKAAYESLDLLLIDDTQIFGKKEKTLEILFSIFNNLVSKGKQIVFVSDKTPDELANIDPRMVSRFKSGLLLKIEKHNLSSLCEILAVKLKEKDPNIQITNEAREKAAQISGNDVRSLNGIATKLLFYVKTTKQNLINNDNLKEILFEEFEKFHKKSFDPYLLIENVCRRFNVPVDSVLSENRKAELVRVRDVCNYILREKYKMQFQQIGKIFKRNHSTVVAAVKRVAKMIEKDDSLQDIITSLVI</sequence>
<comment type="function">
    <text evidence="1">Plays an essential role in the initiation and regulation of chromosomal replication. ATP-DnaA binds to the origin of replication (oriC) to initiate formation of the DNA replication initiation complex once per cell cycle. Binds the DnaA box (a 9 base pair repeat at the origin) and separates the double-stranded (ds)DNA. Forms a right-handed helical filament on oriC DNA; dsDNA binds to the exterior of the filament while single-stranded (ss)DNA is stabiized in the filament's interior. The ATP-DnaA-oriC complex binds and stabilizes one strand of the AT-rich DNA unwinding element (DUE), permitting loading of DNA polymerase. After initiation quickly degrades to an ADP-DnaA complex that is not apt for DNA replication. Binds acidic phospholipids.</text>
</comment>
<comment type="subunit">
    <text evidence="1">Oligomerizes as a right-handed, spiral filament on DNA at oriC.</text>
</comment>
<comment type="subcellular location">
    <subcellularLocation>
        <location evidence="1">Cytoplasm</location>
    </subcellularLocation>
</comment>
<comment type="domain">
    <text evidence="1">Domain I is involved in oligomerization and binding regulators, domain II is flexibile and of varying length in different bacteria, domain III forms the AAA+ region, while domain IV binds dsDNA.</text>
</comment>
<comment type="similarity">
    <text evidence="1">Belongs to the DnaA family.</text>
</comment>